<comment type="subcellular location">
    <subcellularLocation>
        <location evidence="1">Cytoplasm</location>
    </subcellularLocation>
</comment>
<comment type="similarity">
    <text evidence="1">Belongs to the UPF0291 family.</text>
</comment>
<name>Y1381_STRPC</name>
<organism>
    <name type="scientific">Streptococcus pyogenes serotype M12 (strain MGAS9429)</name>
    <dbReference type="NCBI Taxonomy" id="370551"/>
    <lineage>
        <taxon>Bacteria</taxon>
        <taxon>Bacillati</taxon>
        <taxon>Bacillota</taxon>
        <taxon>Bacilli</taxon>
        <taxon>Lactobacillales</taxon>
        <taxon>Streptococcaceae</taxon>
        <taxon>Streptococcus</taxon>
    </lineage>
</organism>
<gene>
    <name type="ordered locus">MGAS9429_Spy1381</name>
</gene>
<evidence type="ECO:0000255" key="1">
    <source>
        <dbReference type="HAMAP-Rule" id="MF_01103"/>
    </source>
</evidence>
<evidence type="ECO:0000256" key="2">
    <source>
        <dbReference type="SAM" id="MobiDB-lite"/>
    </source>
</evidence>
<dbReference type="EMBL" id="CP000259">
    <property type="protein sequence ID" value="ABF32568.1"/>
    <property type="molecule type" value="Genomic_DNA"/>
</dbReference>
<dbReference type="RefSeq" id="WP_002983550.1">
    <property type="nucleotide sequence ID" value="NC_008021.1"/>
</dbReference>
<dbReference type="SMR" id="Q1JKK1"/>
<dbReference type="KEGG" id="spk:MGAS9429_Spy1381"/>
<dbReference type="HOGENOM" id="CLU_173137_0_2_9"/>
<dbReference type="Proteomes" id="UP000002433">
    <property type="component" value="Chromosome"/>
</dbReference>
<dbReference type="GO" id="GO:0005737">
    <property type="term" value="C:cytoplasm"/>
    <property type="evidence" value="ECO:0007669"/>
    <property type="project" value="UniProtKB-SubCell"/>
</dbReference>
<dbReference type="Gene3D" id="1.10.287.540">
    <property type="entry name" value="Helix hairpin bin"/>
    <property type="match status" value="1"/>
</dbReference>
<dbReference type="HAMAP" id="MF_01103">
    <property type="entry name" value="UPF0291"/>
    <property type="match status" value="1"/>
</dbReference>
<dbReference type="InterPro" id="IPR009242">
    <property type="entry name" value="DUF896"/>
</dbReference>
<dbReference type="NCBIfam" id="NF002711">
    <property type="entry name" value="PRK02539.1"/>
    <property type="match status" value="1"/>
</dbReference>
<dbReference type="PANTHER" id="PTHR37300">
    <property type="entry name" value="UPF0291 PROTEIN CBO2609/CLC_2481"/>
    <property type="match status" value="1"/>
</dbReference>
<dbReference type="PANTHER" id="PTHR37300:SF1">
    <property type="entry name" value="UPF0291 PROTEIN YNZC"/>
    <property type="match status" value="1"/>
</dbReference>
<dbReference type="Pfam" id="PF05979">
    <property type="entry name" value="DUF896"/>
    <property type="match status" value="1"/>
</dbReference>
<dbReference type="SUPFAM" id="SSF158221">
    <property type="entry name" value="YnzC-like"/>
    <property type="match status" value="1"/>
</dbReference>
<keyword id="KW-0963">Cytoplasm</keyword>
<sequence length="85" mass="9801">MDPKKIARINELAKKKKTVGLTGPEKVEQAKLREEYIEGYRRSVRHHIEGIKLVDEEGNDVTPEKLRQVQREKGLHGRSLDDPKS</sequence>
<accession>Q1JKK1</accession>
<protein>
    <recommendedName>
        <fullName evidence="1">UPF0291 protein MGAS9429_Spy1381</fullName>
    </recommendedName>
</protein>
<proteinExistence type="inferred from homology"/>
<feature type="chain" id="PRO_1000065031" description="UPF0291 protein MGAS9429_Spy1381">
    <location>
        <begin position="1"/>
        <end position="85"/>
    </location>
</feature>
<feature type="region of interest" description="Disordered" evidence="2">
    <location>
        <begin position="62"/>
        <end position="85"/>
    </location>
</feature>
<reference key="1">
    <citation type="journal article" date="2006" name="Proc. Natl. Acad. Sci. U.S.A.">
        <title>Molecular genetic anatomy of inter- and intraserotype variation in the human bacterial pathogen group A Streptococcus.</title>
        <authorList>
            <person name="Beres S.B."/>
            <person name="Richter E.W."/>
            <person name="Nagiec M.J."/>
            <person name="Sumby P."/>
            <person name="Porcella S.F."/>
            <person name="DeLeo F.R."/>
            <person name="Musser J.M."/>
        </authorList>
    </citation>
    <scope>NUCLEOTIDE SEQUENCE [LARGE SCALE GENOMIC DNA]</scope>
    <source>
        <strain>MGAS9429</strain>
    </source>
</reference>